<gene>
    <name type="primary">ESP1</name>
    <name type="ordered locus">YGR098C</name>
</gene>
<protein>
    <recommendedName>
        <fullName>Separin</fullName>
        <ecNumber>3.4.22.49</ecNumber>
    </recommendedName>
    <alternativeName>
        <fullName>Separase</fullName>
    </alternativeName>
</protein>
<dbReference type="EC" id="3.4.22.49"/>
<dbReference type="EMBL" id="L07289">
    <property type="protein sequence ID" value="AAB03897.1"/>
    <property type="molecule type" value="Genomic_DNA"/>
</dbReference>
<dbReference type="EMBL" id="Z72883">
    <property type="protein sequence ID" value="CAA97101.1"/>
    <property type="molecule type" value="Genomic_DNA"/>
</dbReference>
<dbReference type="EMBL" id="BK006941">
    <property type="protein sequence ID" value="DAA08191.1"/>
    <property type="molecule type" value="Genomic_DNA"/>
</dbReference>
<dbReference type="PIR" id="S64403">
    <property type="entry name" value="S64403"/>
</dbReference>
<dbReference type="RefSeq" id="NP_011612.3">
    <property type="nucleotide sequence ID" value="NM_001181227.3"/>
</dbReference>
<dbReference type="PDB" id="5U1S">
    <property type="method" value="X-ray"/>
    <property type="resolution" value="3.00 A"/>
    <property type="chains" value="A=51-1630"/>
</dbReference>
<dbReference type="PDB" id="5U1T">
    <property type="method" value="X-ray"/>
    <property type="resolution" value="2.60 A"/>
    <property type="chains" value="A=51-1630"/>
</dbReference>
<dbReference type="PDBsum" id="5U1S"/>
<dbReference type="PDBsum" id="5U1T"/>
<dbReference type="SMR" id="Q03018"/>
<dbReference type="BioGRID" id="33341">
    <property type="interactions" value="591"/>
</dbReference>
<dbReference type="ComplexPortal" id="CPX-1340">
    <property type="entry name" value="Separase-Securin complex"/>
</dbReference>
<dbReference type="DIP" id="DIP-2933N"/>
<dbReference type="ELM" id="Q03018"/>
<dbReference type="FunCoup" id="Q03018">
    <property type="interactions" value="388"/>
</dbReference>
<dbReference type="IntAct" id="Q03018">
    <property type="interactions" value="7"/>
</dbReference>
<dbReference type="MINT" id="Q03018"/>
<dbReference type="STRING" id="4932.YGR098C"/>
<dbReference type="MEROPS" id="C50.001"/>
<dbReference type="iPTMnet" id="Q03018"/>
<dbReference type="PaxDb" id="4932-YGR098C"/>
<dbReference type="PeptideAtlas" id="Q03018"/>
<dbReference type="EnsemblFungi" id="YGR098C_mRNA">
    <property type="protein sequence ID" value="YGR098C"/>
    <property type="gene ID" value="YGR098C"/>
</dbReference>
<dbReference type="GeneID" id="852990"/>
<dbReference type="KEGG" id="sce:YGR098C"/>
<dbReference type="AGR" id="SGD:S000003330"/>
<dbReference type="SGD" id="S000003330">
    <property type="gene designation" value="ESP1"/>
</dbReference>
<dbReference type="VEuPathDB" id="FungiDB:YGR098C"/>
<dbReference type="eggNOG" id="KOG1849">
    <property type="taxonomic scope" value="Eukaryota"/>
</dbReference>
<dbReference type="GeneTree" id="ENSGT00390000004990"/>
<dbReference type="HOGENOM" id="CLU_243454_0_0_1"/>
<dbReference type="InParanoid" id="Q03018"/>
<dbReference type="OMA" id="SRDVCHL"/>
<dbReference type="OrthoDB" id="10255632at2759"/>
<dbReference type="BioCyc" id="YEAST:G3O-30808-MONOMER"/>
<dbReference type="BRENDA" id="3.4.22.49">
    <property type="organism ID" value="984"/>
</dbReference>
<dbReference type="Reactome" id="R-SCE-2467813">
    <property type="pathway name" value="Separation of Sister Chromatids"/>
</dbReference>
<dbReference type="BioGRID-ORCS" id="852990">
    <property type="hits" value="2 hits in 10 CRISPR screens"/>
</dbReference>
<dbReference type="CD-CODE" id="876000F7">
    <property type="entry name" value="Centrosome"/>
</dbReference>
<dbReference type="PRO" id="PR:Q03018"/>
<dbReference type="Proteomes" id="UP000002311">
    <property type="component" value="Chromosome VII"/>
</dbReference>
<dbReference type="RNAct" id="Q03018">
    <property type="molecule type" value="protein"/>
</dbReference>
<dbReference type="GO" id="GO:0005737">
    <property type="term" value="C:cytoplasm"/>
    <property type="evidence" value="ECO:0000314"/>
    <property type="project" value="SGD"/>
</dbReference>
<dbReference type="GO" id="GO:0005739">
    <property type="term" value="C:mitochondrion"/>
    <property type="evidence" value="ECO:0007005"/>
    <property type="project" value="SGD"/>
</dbReference>
<dbReference type="GO" id="GO:0072686">
    <property type="term" value="C:mitotic spindle"/>
    <property type="evidence" value="ECO:0000318"/>
    <property type="project" value="GO_Central"/>
</dbReference>
<dbReference type="GO" id="GO:0044732">
    <property type="term" value="C:mitotic spindle pole body"/>
    <property type="evidence" value="ECO:0000318"/>
    <property type="project" value="GO_Central"/>
</dbReference>
<dbReference type="GO" id="GO:0005634">
    <property type="term" value="C:nucleus"/>
    <property type="evidence" value="ECO:0000314"/>
    <property type="project" value="SGD"/>
</dbReference>
<dbReference type="GO" id="GO:1990520">
    <property type="term" value="C:separase-securin complex"/>
    <property type="evidence" value="ECO:0000353"/>
    <property type="project" value="ComplexPortal"/>
</dbReference>
<dbReference type="GO" id="GO:0005819">
    <property type="term" value="C:spindle"/>
    <property type="evidence" value="ECO:0000314"/>
    <property type="project" value="SGD"/>
</dbReference>
<dbReference type="GO" id="GO:0004197">
    <property type="term" value="F:cysteine-type endopeptidase activity"/>
    <property type="evidence" value="ECO:0000314"/>
    <property type="project" value="SGD"/>
</dbReference>
<dbReference type="GO" id="GO:0006915">
    <property type="term" value="P:apoptotic process"/>
    <property type="evidence" value="ECO:0000315"/>
    <property type="project" value="SGD"/>
</dbReference>
<dbReference type="GO" id="GO:0007135">
    <property type="term" value="P:meiosis II"/>
    <property type="evidence" value="ECO:0000314"/>
    <property type="project" value="SGD"/>
</dbReference>
<dbReference type="GO" id="GO:0051307">
    <property type="term" value="P:meiotic chromosome separation"/>
    <property type="evidence" value="ECO:0000318"/>
    <property type="project" value="GO_Central"/>
</dbReference>
<dbReference type="GO" id="GO:0000070">
    <property type="term" value="P:mitotic sister chromatid segregation"/>
    <property type="evidence" value="ECO:0000315"/>
    <property type="project" value="SGD"/>
</dbReference>
<dbReference type="GO" id="GO:1904750">
    <property type="term" value="P:negative regulation of protein localization to nucleolus"/>
    <property type="evidence" value="ECO:0000315"/>
    <property type="project" value="SGD"/>
</dbReference>
<dbReference type="GO" id="GO:0031536">
    <property type="term" value="P:positive regulation of exit from mitosis"/>
    <property type="evidence" value="ECO:0000315"/>
    <property type="project" value="SGD"/>
</dbReference>
<dbReference type="GO" id="GO:1902104">
    <property type="term" value="P:positive regulation of metaphase/anaphase transition of meiotic cell cycle"/>
    <property type="evidence" value="ECO:0000314"/>
    <property type="project" value="ComplexPortal"/>
</dbReference>
<dbReference type="GO" id="GO:0006508">
    <property type="term" value="P:proteolysis"/>
    <property type="evidence" value="ECO:0007669"/>
    <property type="project" value="UniProtKB-KW"/>
</dbReference>
<dbReference type="GO" id="GO:0032888">
    <property type="term" value="P:regulation of mitotic spindle elongation"/>
    <property type="evidence" value="ECO:0000315"/>
    <property type="project" value="SGD"/>
</dbReference>
<dbReference type="InterPro" id="IPR005314">
    <property type="entry name" value="Peptidase_C50"/>
</dbReference>
<dbReference type="InterPro" id="IPR030397">
    <property type="entry name" value="SEPARIN_core_dom"/>
</dbReference>
<dbReference type="PANTHER" id="PTHR12792">
    <property type="entry name" value="EXTRA SPINDLE POLES 1-RELATED"/>
    <property type="match status" value="1"/>
</dbReference>
<dbReference type="PANTHER" id="PTHR12792:SF0">
    <property type="entry name" value="SEPARIN"/>
    <property type="match status" value="1"/>
</dbReference>
<dbReference type="Pfam" id="PF03568">
    <property type="entry name" value="Peptidase_C50"/>
    <property type="match status" value="1"/>
</dbReference>
<dbReference type="PROSITE" id="PS51700">
    <property type="entry name" value="SEPARIN"/>
    <property type="match status" value="1"/>
</dbReference>
<keyword id="KW-0002">3D-structure</keyword>
<keyword id="KW-0106">Calcium</keyword>
<keyword id="KW-0159">Chromosome partition</keyword>
<keyword id="KW-0963">Cytoplasm</keyword>
<keyword id="KW-0206">Cytoskeleton</keyword>
<keyword id="KW-0378">Hydrolase</keyword>
<keyword id="KW-0539">Nucleus</keyword>
<keyword id="KW-0645">Protease</keyword>
<keyword id="KW-1185">Reference proteome</keyword>
<keyword id="KW-0788">Thiol protease</keyword>
<organism>
    <name type="scientific">Saccharomyces cerevisiae (strain ATCC 204508 / S288c)</name>
    <name type="common">Baker's yeast</name>
    <dbReference type="NCBI Taxonomy" id="559292"/>
    <lineage>
        <taxon>Eukaryota</taxon>
        <taxon>Fungi</taxon>
        <taxon>Dikarya</taxon>
        <taxon>Ascomycota</taxon>
        <taxon>Saccharomycotina</taxon>
        <taxon>Saccharomycetes</taxon>
        <taxon>Saccharomycetales</taxon>
        <taxon>Saccharomycetaceae</taxon>
        <taxon>Saccharomyces</taxon>
    </lineage>
</organism>
<feature type="chain" id="PRO_0000205904" description="Separin">
    <location>
        <begin position="1"/>
        <end position="1630"/>
    </location>
</feature>
<feature type="domain" description="Peptidase C50">
    <location>
        <begin position="1443"/>
        <end position="1542"/>
    </location>
</feature>
<feature type="region of interest" description="Disordered" evidence="2">
    <location>
        <begin position="1016"/>
        <end position="1037"/>
    </location>
</feature>
<feature type="active site" evidence="1">
    <location>
        <position position="1531"/>
    </location>
</feature>
<feature type="mutagenesis site" description="Reduces function. Loss of function." evidence="4">
    <original>DKD</original>
    <variation>AKA</variation>
    <location>
        <begin position="1568"/>
        <end position="1570"/>
    </location>
</feature>
<feature type="sequence conflict" description="In Ref. 1; AAB03897." evidence="7" ref="1">
    <original>F</original>
    <variation>S</variation>
    <location>
        <position position="136"/>
    </location>
</feature>
<feature type="sequence conflict" description="In Ref. 1; AAB03897." evidence="7" ref="1">
    <original>TVEC</original>
    <variation>IRRV</variation>
    <location>
        <begin position="250"/>
        <end position="253"/>
    </location>
</feature>
<feature type="sequence conflict" description="In Ref. 1; AAB03897." evidence="7" ref="1">
    <original>V</original>
    <variation>L</variation>
    <location>
        <position position="540"/>
    </location>
</feature>
<feature type="sequence conflict" description="In Ref. 1; AAB03897." evidence="7" ref="1">
    <original>S</original>
    <variation>Y</variation>
    <location>
        <position position="636"/>
    </location>
</feature>
<feature type="sequence conflict" description="In Ref. 1; AAB03897." evidence="7" ref="1">
    <original>K</original>
    <variation>E</variation>
    <location>
        <position position="782"/>
    </location>
</feature>
<feature type="sequence conflict" description="In Ref. 1; AAB03897." evidence="7" ref="1">
    <original>A</original>
    <variation>E</variation>
    <location>
        <position position="800"/>
    </location>
</feature>
<feature type="sequence conflict" description="In Ref. 1; AAB03897." evidence="7" ref="1">
    <original>I</original>
    <variation>T</variation>
    <location>
        <position position="1146"/>
    </location>
</feature>
<feature type="sequence conflict" description="In Ref. 1; AAB03897." evidence="7" ref="1">
    <original>K</original>
    <variation>R</variation>
    <location>
        <position position="1295"/>
    </location>
</feature>
<feature type="sequence conflict" description="In Ref. 1; AAB03897." evidence="7" ref="1">
    <original>QEID</original>
    <variation>ARKSI</variation>
    <location>
        <begin position="1333"/>
        <end position="1336"/>
    </location>
</feature>
<feature type="sequence conflict" description="In Ref. 1; AAB03897." evidence="7" ref="1">
    <original>E</original>
    <variation>Q</variation>
    <location>
        <position position="1443"/>
    </location>
</feature>
<feature type="helix" evidence="8">
    <location>
        <begin position="54"/>
        <end position="73"/>
    </location>
</feature>
<feature type="helix" evidence="8">
    <location>
        <begin position="75"/>
        <end position="80"/>
    </location>
</feature>
<feature type="helix" evidence="9">
    <location>
        <begin position="82"/>
        <end position="98"/>
    </location>
</feature>
<feature type="helix" evidence="9">
    <location>
        <begin position="103"/>
        <end position="121"/>
    </location>
</feature>
<feature type="helix" evidence="9">
    <location>
        <begin position="125"/>
        <end position="137"/>
    </location>
</feature>
<feature type="helix" evidence="9">
    <location>
        <begin position="147"/>
        <end position="151"/>
    </location>
</feature>
<feature type="turn" evidence="9">
    <location>
        <begin position="157"/>
        <end position="162"/>
    </location>
</feature>
<feature type="helix" evidence="9">
    <location>
        <begin position="163"/>
        <end position="176"/>
    </location>
</feature>
<feature type="helix" evidence="9">
    <location>
        <begin position="180"/>
        <end position="192"/>
    </location>
</feature>
<feature type="helix" evidence="9">
    <location>
        <begin position="194"/>
        <end position="197"/>
    </location>
</feature>
<feature type="turn" evidence="9">
    <location>
        <begin position="198"/>
        <end position="200"/>
    </location>
</feature>
<feature type="helix" evidence="9">
    <location>
        <begin position="206"/>
        <end position="219"/>
    </location>
</feature>
<feature type="helix" evidence="9">
    <location>
        <begin position="224"/>
        <end position="237"/>
    </location>
</feature>
<feature type="helix" evidence="9">
    <location>
        <begin position="242"/>
        <end position="244"/>
    </location>
</feature>
<feature type="helix" evidence="9">
    <location>
        <begin position="251"/>
        <end position="259"/>
    </location>
</feature>
<feature type="turn" evidence="9">
    <location>
        <begin position="261"/>
        <end position="264"/>
    </location>
</feature>
<feature type="helix" evidence="9">
    <location>
        <begin position="267"/>
        <end position="271"/>
    </location>
</feature>
<feature type="helix" evidence="9">
    <location>
        <begin position="273"/>
        <end position="284"/>
    </location>
</feature>
<feature type="strand" evidence="8">
    <location>
        <begin position="286"/>
        <end position="288"/>
    </location>
</feature>
<feature type="helix" evidence="9">
    <location>
        <begin position="292"/>
        <end position="295"/>
    </location>
</feature>
<feature type="helix" evidence="9">
    <location>
        <begin position="298"/>
        <end position="308"/>
    </location>
</feature>
<feature type="helix" evidence="9">
    <location>
        <begin position="320"/>
        <end position="322"/>
    </location>
</feature>
<feature type="strand" evidence="8">
    <location>
        <begin position="324"/>
        <end position="326"/>
    </location>
</feature>
<feature type="helix" evidence="9">
    <location>
        <begin position="332"/>
        <end position="347"/>
    </location>
</feature>
<feature type="helix" evidence="9">
    <location>
        <begin position="353"/>
        <end position="370"/>
    </location>
</feature>
<feature type="helix" evidence="9">
    <location>
        <begin position="376"/>
        <end position="391"/>
    </location>
</feature>
<feature type="helix" evidence="9">
    <location>
        <begin position="399"/>
        <end position="418"/>
    </location>
</feature>
<feature type="helix" evidence="9">
    <location>
        <begin position="422"/>
        <end position="438"/>
    </location>
</feature>
<feature type="helix" evidence="9">
    <location>
        <begin position="442"/>
        <end position="459"/>
    </location>
</feature>
<feature type="turn" evidence="9">
    <location>
        <begin position="462"/>
        <end position="464"/>
    </location>
</feature>
<feature type="helix" evidence="9">
    <location>
        <begin position="465"/>
        <end position="478"/>
    </location>
</feature>
<feature type="helix" evidence="9">
    <location>
        <begin position="482"/>
        <end position="492"/>
    </location>
</feature>
<feature type="helix" evidence="9">
    <location>
        <begin position="495"/>
        <end position="498"/>
    </location>
</feature>
<feature type="helix" evidence="9">
    <location>
        <begin position="504"/>
        <end position="517"/>
    </location>
</feature>
<feature type="helix" evidence="9">
    <location>
        <begin position="519"/>
        <end position="522"/>
    </location>
</feature>
<feature type="helix" evidence="9">
    <location>
        <begin position="535"/>
        <end position="543"/>
    </location>
</feature>
<feature type="helix" evidence="9">
    <location>
        <begin position="552"/>
        <end position="554"/>
    </location>
</feature>
<feature type="helix" evidence="9">
    <location>
        <begin position="557"/>
        <end position="567"/>
    </location>
</feature>
<feature type="helix" evidence="9">
    <location>
        <begin position="574"/>
        <end position="577"/>
    </location>
</feature>
<feature type="helix" evidence="9">
    <location>
        <begin position="586"/>
        <end position="590"/>
    </location>
</feature>
<feature type="helix" evidence="9">
    <location>
        <begin position="591"/>
        <end position="606"/>
    </location>
</feature>
<feature type="helix" evidence="9">
    <location>
        <begin position="612"/>
        <end position="622"/>
    </location>
</feature>
<feature type="helix" evidence="9">
    <location>
        <begin position="624"/>
        <end position="626"/>
    </location>
</feature>
<feature type="helix" evidence="9">
    <location>
        <begin position="627"/>
        <end position="630"/>
    </location>
</feature>
<feature type="helix" evidence="9">
    <location>
        <begin position="636"/>
        <end position="651"/>
    </location>
</feature>
<feature type="helix" evidence="9">
    <location>
        <begin position="655"/>
        <end position="667"/>
    </location>
</feature>
<feature type="helix" evidence="9">
    <location>
        <begin position="669"/>
        <end position="672"/>
    </location>
</feature>
<feature type="turn" evidence="9">
    <location>
        <begin position="673"/>
        <end position="675"/>
    </location>
</feature>
<feature type="helix" evidence="9">
    <location>
        <begin position="676"/>
        <end position="689"/>
    </location>
</feature>
<feature type="helix" evidence="9">
    <location>
        <begin position="693"/>
        <end position="706"/>
    </location>
</feature>
<feature type="strand" evidence="9">
    <location>
        <begin position="709"/>
        <end position="712"/>
    </location>
</feature>
<feature type="helix" evidence="9">
    <location>
        <begin position="714"/>
        <end position="723"/>
    </location>
</feature>
<feature type="helix" evidence="9">
    <location>
        <begin position="727"/>
        <end position="729"/>
    </location>
</feature>
<feature type="strand" evidence="9">
    <location>
        <begin position="730"/>
        <end position="732"/>
    </location>
</feature>
<feature type="helix" evidence="9">
    <location>
        <begin position="734"/>
        <end position="742"/>
    </location>
</feature>
<feature type="helix" evidence="9">
    <location>
        <begin position="744"/>
        <end position="748"/>
    </location>
</feature>
<feature type="helix" evidence="9">
    <location>
        <begin position="750"/>
        <end position="753"/>
    </location>
</feature>
<feature type="helix" evidence="9">
    <location>
        <begin position="763"/>
        <end position="786"/>
    </location>
</feature>
<feature type="helix" evidence="9">
    <location>
        <begin position="790"/>
        <end position="809"/>
    </location>
</feature>
<feature type="strand" evidence="8">
    <location>
        <begin position="810"/>
        <end position="812"/>
    </location>
</feature>
<feature type="helix" evidence="9">
    <location>
        <begin position="816"/>
        <end position="839"/>
    </location>
</feature>
<feature type="helix" evidence="9">
    <location>
        <begin position="843"/>
        <end position="859"/>
    </location>
</feature>
<feature type="helix" evidence="9">
    <location>
        <begin position="863"/>
        <end position="879"/>
    </location>
</feature>
<feature type="helix" evidence="9">
    <location>
        <begin position="883"/>
        <end position="897"/>
    </location>
</feature>
<feature type="turn" evidence="9">
    <location>
        <begin position="902"/>
        <end position="904"/>
    </location>
</feature>
<feature type="helix" evidence="9">
    <location>
        <begin position="906"/>
        <end position="915"/>
    </location>
</feature>
<feature type="helix" evidence="9">
    <location>
        <begin position="919"/>
        <end position="925"/>
    </location>
</feature>
<feature type="helix" evidence="9">
    <location>
        <begin position="927"/>
        <end position="930"/>
    </location>
</feature>
<feature type="helix" evidence="9">
    <location>
        <begin position="931"/>
        <end position="933"/>
    </location>
</feature>
<feature type="helix" evidence="9">
    <location>
        <begin position="939"/>
        <end position="946"/>
    </location>
</feature>
<feature type="helix" evidence="9">
    <location>
        <begin position="953"/>
        <end position="955"/>
    </location>
</feature>
<feature type="helix" evidence="9">
    <location>
        <begin position="958"/>
        <end position="960"/>
    </location>
</feature>
<feature type="helix" evidence="9">
    <location>
        <begin position="961"/>
        <end position="980"/>
    </location>
</feature>
<feature type="helix" evidence="9">
    <location>
        <begin position="984"/>
        <end position="989"/>
    </location>
</feature>
<feature type="strand" evidence="9">
    <location>
        <begin position="994"/>
        <end position="997"/>
    </location>
</feature>
<feature type="helix" evidence="9">
    <location>
        <begin position="1046"/>
        <end position="1062"/>
    </location>
</feature>
<feature type="helix" evidence="9">
    <location>
        <begin position="1065"/>
        <end position="1067"/>
    </location>
</feature>
<feature type="helix" evidence="9">
    <location>
        <begin position="1070"/>
        <end position="1088"/>
    </location>
</feature>
<feature type="helix" evidence="9">
    <location>
        <begin position="1096"/>
        <end position="1106"/>
    </location>
</feature>
<feature type="helix" evidence="9">
    <location>
        <begin position="1109"/>
        <end position="1122"/>
    </location>
</feature>
<feature type="helix" evidence="9">
    <location>
        <begin position="1126"/>
        <end position="1130"/>
    </location>
</feature>
<feature type="helix" evidence="9">
    <location>
        <begin position="1145"/>
        <end position="1161"/>
    </location>
</feature>
<feature type="strand" evidence="9">
    <location>
        <begin position="1165"/>
        <end position="1173"/>
    </location>
</feature>
<feature type="turn" evidence="9">
    <location>
        <begin position="1175"/>
        <end position="1177"/>
    </location>
</feature>
<feature type="strand" evidence="9">
    <location>
        <begin position="1180"/>
        <end position="1186"/>
    </location>
</feature>
<feature type="turn" evidence="9">
    <location>
        <begin position="1187"/>
        <end position="1190"/>
    </location>
</feature>
<feature type="strand" evidence="9">
    <location>
        <begin position="1191"/>
        <end position="1197"/>
    </location>
</feature>
<feature type="helix" evidence="9">
    <location>
        <begin position="1214"/>
        <end position="1232"/>
    </location>
</feature>
<feature type="helix" evidence="9">
    <location>
        <begin position="1234"/>
        <end position="1237"/>
    </location>
</feature>
<feature type="helix" evidence="9">
    <location>
        <begin position="1243"/>
        <end position="1271"/>
    </location>
</feature>
<feature type="turn" evidence="9">
    <location>
        <begin position="1272"/>
        <end position="1275"/>
    </location>
</feature>
<feature type="helix" evidence="9">
    <location>
        <begin position="1276"/>
        <end position="1279"/>
    </location>
</feature>
<feature type="helix" evidence="9">
    <location>
        <begin position="1286"/>
        <end position="1303"/>
    </location>
</feature>
<feature type="helix" evidence="9">
    <location>
        <begin position="1305"/>
        <end position="1309"/>
    </location>
</feature>
<feature type="helix" evidence="8">
    <location>
        <begin position="1313"/>
        <end position="1315"/>
    </location>
</feature>
<feature type="helix" evidence="9">
    <location>
        <begin position="1321"/>
        <end position="1328"/>
    </location>
</feature>
<feature type="helix" evidence="9">
    <location>
        <begin position="1337"/>
        <end position="1354"/>
    </location>
</feature>
<feature type="helix" evidence="9">
    <location>
        <begin position="1361"/>
        <end position="1363"/>
    </location>
</feature>
<feature type="helix" evidence="9">
    <location>
        <begin position="1366"/>
        <end position="1381"/>
    </location>
</feature>
<feature type="strand" evidence="9">
    <location>
        <begin position="1390"/>
        <end position="1396"/>
    </location>
</feature>
<feature type="helix" evidence="9">
    <location>
        <begin position="1398"/>
        <end position="1400"/>
    </location>
</feature>
<feature type="helix" evidence="9">
    <location>
        <begin position="1405"/>
        <end position="1407"/>
    </location>
</feature>
<feature type="turn" evidence="9">
    <location>
        <begin position="1409"/>
        <end position="1413"/>
    </location>
</feature>
<feature type="strand" evidence="9">
    <location>
        <begin position="1416"/>
        <end position="1420"/>
    </location>
</feature>
<feature type="helix" evidence="9">
    <location>
        <begin position="1422"/>
        <end position="1431"/>
    </location>
</feature>
<feature type="turn" evidence="9">
    <location>
        <begin position="1432"/>
        <end position="1434"/>
    </location>
</feature>
<feature type="strand" evidence="9">
    <location>
        <begin position="1436"/>
        <end position="1441"/>
    </location>
</feature>
<feature type="strand" evidence="9">
    <location>
        <begin position="1446"/>
        <end position="1450"/>
    </location>
</feature>
<feature type="helix" evidence="9">
    <location>
        <begin position="1457"/>
        <end position="1470"/>
    </location>
</feature>
<feature type="strand" evidence="9">
    <location>
        <begin position="1478"/>
        <end position="1483"/>
    </location>
</feature>
<feature type="helix" evidence="9">
    <location>
        <begin position="1487"/>
        <end position="1495"/>
    </location>
</feature>
<feature type="strand" evidence="9">
    <location>
        <begin position="1498"/>
        <end position="1505"/>
    </location>
</feature>
<feature type="turn" evidence="9">
    <location>
        <begin position="1509"/>
        <end position="1511"/>
    </location>
</feature>
<feature type="helix" evidence="9">
    <location>
        <begin position="1514"/>
        <end position="1517"/>
    </location>
</feature>
<feature type="strand" evidence="9">
    <location>
        <begin position="1526"/>
        <end position="1528"/>
    </location>
</feature>
<feature type="turn" evidence="9">
    <location>
        <begin position="1531"/>
        <end position="1534"/>
    </location>
</feature>
<feature type="strand" evidence="8">
    <location>
        <begin position="1537"/>
        <end position="1539"/>
    </location>
</feature>
<feature type="strand" evidence="8">
    <location>
        <begin position="1542"/>
        <end position="1545"/>
    </location>
</feature>
<feature type="helix" evidence="9">
    <location>
        <begin position="1547"/>
        <end position="1553"/>
    </location>
</feature>
<feature type="strand" evidence="9">
    <location>
        <begin position="1557"/>
        <end position="1564"/>
    </location>
</feature>
<feature type="helix" evidence="9">
    <location>
        <begin position="1568"/>
        <end position="1582"/>
    </location>
</feature>
<feature type="helix" evidence="9">
    <location>
        <begin position="1598"/>
        <end position="1605"/>
    </location>
</feature>
<feature type="helix" evidence="9">
    <location>
        <begin position="1606"/>
        <end position="1608"/>
    </location>
</feature>
<feature type="strand" evidence="9">
    <location>
        <begin position="1609"/>
        <end position="1611"/>
    </location>
</feature>
<feature type="turn" evidence="9">
    <location>
        <begin position="1612"/>
        <end position="1617"/>
    </location>
</feature>
<feature type="strand" evidence="9">
    <location>
        <begin position="1619"/>
        <end position="1623"/>
    </location>
</feature>
<feature type="strand" evidence="9">
    <location>
        <begin position="1626"/>
        <end position="1629"/>
    </location>
</feature>
<evidence type="ECO:0000250" key="1"/>
<evidence type="ECO:0000256" key="2">
    <source>
        <dbReference type="SAM" id="MobiDB-lite"/>
    </source>
</evidence>
<evidence type="ECO:0000269" key="3">
    <source>
    </source>
</evidence>
<evidence type="ECO:0000269" key="4">
    <source>
    </source>
</evidence>
<evidence type="ECO:0000269" key="5">
    <source>
    </source>
</evidence>
<evidence type="ECO:0000269" key="6">
    <source>
    </source>
</evidence>
<evidence type="ECO:0000305" key="7"/>
<evidence type="ECO:0007829" key="8">
    <source>
        <dbReference type="PDB" id="5U1S"/>
    </source>
</evidence>
<evidence type="ECO:0007829" key="9">
    <source>
        <dbReference type="PDB" id="5U1T"/>
    </source>
</evidence>
<sequence>MMVKQEEPLNEISPNTPMTSKSYLLNDTLSKVHHSGQTRPLTSVLSGDASSNSIGILAMHNNIIRDFTKIASNNIDLAIEDITTVDHSLNSIYSLLKSHHMWGHINSTVKQHLMIIVKLINNNALGLASSEIIFLFNETNLFQAHSLKNILLADFSTWNDYYLSNLKILALQIILKRKLVDEYLPHILELFSHDKRYLLKDPNLKAHALTKIVLSFFSVTTSCKVLFGLKFLQYIKQFKLPFKKFISNITVECFSKNLLHKNYLEMGPNKIYLNSFYLSYSMLYDGLDKIMLLDILSYEETTEVQRAIKSKKEFNEYCNMSENRLLWSCISVDDLNVILENATNFLQNKGKHISATLKCLVCLWSTIRLEGLPKNKDILRQFDCTVIYINSNIKSINDESAAALLSELLGVLSEICIDYKEPKRLSNIISVLFNASVLFKSHSFLLKTANLEISNVLISNDSKTSHRTILKFEKFISSAQSAQKKIEIFSCLFNVYCMLRNDTLSFVFDFCQNAFIHCFTRLKITKFIEFSNSSEIMLSVLYGNSSIENIPSENWSQLSRMIFCSLRGIFDLDPLELNNTFDKLHLLNKYELLIRIVYLLNLDMSKHLTTNLSKITKLYINKWLQKSDEKAERISSFEMDFVKMLLCYLNFNNFDKLSIELSLCIKSKEKYYSSIVPYADNYLLEAYLSLYMIDDALMMKNQLQKTMNLSTAKIEQALLHASSLINVHLWDSDLTAFQIYFGKTLPAMKPELFDINNDHNLPMSLYIKVILLNIKIFNESAKLNIKAGNVISAVIDCRKAQNLALSLLKKKNKLSQGSRLALLKSLSFSFFQLIKIHIRIGSARDCEFYSKELSRIISDLEEPIIVYRCLHFLHRYYMITEQTCLQNITLGKANKAFDYLDAEADITSLTMFLYDNKEFVKLEQSLVLYFGDQLEKTFLPNLWKLHLGKDIDDSICLSEYMPKNVINRVHNMWQKVMSQLEEDPFFKGMFESTLGIPSSLPVIPSTMPNNILKTPSKHSTGLKLCDSPRSSSMTPRGKNIRQKFDRIAAISKLKQMKELLESLKLDTLDNHELSKISSLSSLTLTILSNITSIHNAESSLITNFSLTDLPRHMPLLFDKVLNNIDNKNYREFRVSSLIAPNNISTITESIRVSAAQKDLMESNLNINVITIDFCPITGNLLLSKLEPRRKRRTHLRLPLIRSNSRDLDEVHLSFPEATKKLLSIINESNQTTSVEVTNKIKTREERKSWWTTRYDLDKRMQQLLNNIENSWFNGVQGFFSPEVVDNSLFEKFKDKFYEILHQNLPSRKLYGNPAMFIKVEDWVIELFLKLNPQEIDFLSKMEDLIYFVLDILLFHGEENAYDEIDFSMLHVQLEEQIKKYRATMTTNSIFHTFLVVSSSCHLFPWECLSFLKDLSITRVPSYVCLNKLLSRFHYQLPLQVTIEDNISMILNPNGDLSRTESKFKGMFQKIIDAKPSSQLVMNEKPEEETLLKMLQNSNLFVYIGHGGGEQYVRSKEIKKCTKIAPSFLLGCSSAAMKYYGKLEPTGTIYTYLLGGCPMVLGNLWDVTDKDIDKFSEELFEKMGFRCNTDDLNGNSLSVSYAVSKSRGVCHLRYLNGAAPVIYGLPIKFVS</sequence>
<name>ESP1_YEAST</name>
<accession>Q03018</accession>
<accession>D6VUN0</accession>
<proteinExistence type="evidence at protein level"/>
<reference key="1">
    <citation type="journal article" date="1992" name="Mol. Biol. Cell">
        <title>Requirement for ESP1 in the nuclear division of Saccharomyces cerevisiae.</title>
        <authorList>
            <person name="McGrew J.T."/>
            <person name="Goetsch L."/>
            <person name="Byers B.E."/>
            <person name="Baum P."/>
        </authorList>
    </citation>
    <scope>NUCLEOTIDE SEQUENCE [GENOMIC DNA] OF 59-1630</scope>
</reference>
<reference key="2">
    <citation type="journal article" date="1997" name="Nature">
        <title>The nucleotide sequence of Saccharomyces cerevisiae chromosome VII.</title>
        <authorList>
            <person name="Tettelin H."/>
            <person name="Agostoni-Carbone M.L."/>
            <person name="Albermann K."/>
            <person name="Albers M."/>
            <person name="Arroyo J."/>
            <person name="Backes U."/>
            <person name="Barreiros T."/>
            <person name="Bertani I."/>
            <person name="Bjourson A.J."/>
            <person name="Brueckner M."/>
            <person name="Bruschi C.V."/>
            <person name="Carignani G."/>
            <person name="Castagnoli L."/>
            <person name="Cerdan E."/>
            <person name="Clemente M.L."/>
            <person name="Coblenz A."/>
            <person name="Coglievina M."/>
            <person name="Coissac E."/>
            <person name="Defoor E."/>
            <person name="Del Bino S."/>
            <person name="Delius H."/>
            <person name="Delneri D."/>
            <person name="de Wergifosse P."/>
            <person name="Dujon B."/>
            <person name="Durand P."/>
            <person name="Entian K.-D."/>
            <person name="Eraso P."/>
            <person name="Escribano V."/>
            <person name="Fabiani L."/>
            <person name="Fartmann B."/>
            <person name="Feroli F."/>
            <person name="Feuermann M."/>
            <person name="Frontali L."/>
            <person name="Garcia-Gonzalez M."/>
            <person name="Garcia-Saez M.I."/>
            <person name="Goffeau A."/>
            <person name="Guerreiro P."/>
            <person name="Hani J."/>
            <person name="Hansen M."/>
            <person name="Hebling U."/>
            <person name="Hernandez K."/>
            <person name="Heumann K."/>
            <person name="Hilger F."/>
            <person name="Hofmann B."/>
            <person name="Indge K.J."/>
            <person name="James C.M."/>
            <person name="Klima R."/>
            <person name="Koetter P."/>
            <person name="Kramer B."/>
            <person name="Kramer W."/>
            <person name="Lauquin G."/>
            <person name="Leuther H."/>
            <person name="Louis E.J."/>
            <person name="Maillier E."/>
            <person name="Marconi A."/>
            <person name="Martegani E."/>
            <person name="Mazon M.J."/>
            <person name="Mazzoni C."/>
            <person name="McReynolds A.D.K."/>
            <person name="Melchioretto P."/>
            <person name="Mewes H.-W."/>
            <person name="Minenkova O."/>
            <person name="Mueller-Auer S."/>
            <person name="Nawrocki A."/>
            <person name="Netter P."/>
            <person name="Neu R."/>
            <person name="Nombela C."/>
            <person name="Oliver S.G."/>
            <person name="Panzeri L."/>
            <person name="Paoluzi S."/>
            <person name="Plevani P."/>
            <person name="Portetelle D."/>
            <person name="Portillo F."/>
            <person name="Potier S."/>
            <person name="Purnelle B."/>
            <person name="Rieger M."/>
            <person name="Riles L."/>
            <person name="Rinaldi T."/>
            <person name="Robben J."/>
            <person name="Rodrigues-Pousada C."/>
            <person name="Rodriguez-Belmonte E."/>
            <person name="Rodriguez-Torres A.M."/>
            <person name="Rose M."/>
            <person name="Ruzzi M."/>
            <person name="Saliola M."/>
            <person name="Sanchez-Perez M."/>
            <person name="Schaefer B."/>
            <person name="Schaefer M."/>
            <person name="Scharfe M."/>
            <person name="Schmidheini T."/>
            <person name="Schreer A."/>
            <person name="Skala J."/>
            <person name="Souciet J.-L."/>
            <person name="Steensma H.Y."/>
            <person name="Talla E."/>
            <person name="Thierry A."/>
            <person name="Vandenbol M."/>
            <person name="van der Aart Q.J.M."/>
            <person name="Van Dyck L."/>
            <person name="Vanoni M."/>
            <person name="Verhasselt P."/>
            <person name="Voet M."/>
            <person name="Volckaert G."/>
            <person name="Wambutt R."/>
            <person name="Watson M.D."/>
            <person name="Weber N."/>
            <person name="Wedler E."/>
            <person name="Wedler H."/>
            <person name="Wipfli P."/>
            <person name="Wolf K."/>
            <person name="Wright L.F."/>
            <person name="Zaccaria P."/>
            <person name="Zimmermann M."/>
            <person name="Zollner A."/>
            <person name="Kleine K."/>
        </authorList>
    </citation>
    <scope>NUCLEOTIDE SEQUENCE [LARGE SCALE GENOMIC DNA]</scope>
    <source>
        <strain>ATCC 204508 / S288c</strain>
    </source>
</reference>
<reference key="3">
    <citation type="journal article" date="2014" name="G3 (Bethesda)">
        <title>The reference genome sequence of Saccharomyces cerevisiae: Then and now.</title>
        <authorList>
            <person name="Engel S.R."/>
            <person name="Dietrich F.S."/>
            <person name="Fisk D.G."/>
            <person name="Binkley G."/>
            <person name="Balakrishnan R."/>
            <person name="Costanzo M.C."/>
            <person name="Dwight S.S."/>
            <person name="Hitz B.C."/>
            <person name="Karra K."/>
            <person name="Nash R.S."/>
            <person name="Weng S."/>
            <person name="Wong E.D."/>
            <person name="Lloyd P."/>
            <person name="Skrzypek M.S."/>
            <person name="Miyasato S.R."/>
            <person name="Simison M."/>
            <person name="Cherry J.M."/>
        </authorList>
    </citation>
    <scope>GENOME REANNOTATION</scope>
    <source>
        <strain>ATCC 204508 / S288c</strain>
    </source>
</reference>
<reference key="4">
    <citation type="journal article" date="1998" name="Cell">
        <title>An ESP1/PDS1 complex regulates loss of sister chromatid cohesion at the metaphase to anaphase transition in yeast.</title>
        <authorList>
            <person name="Ciosk R."/>
            <person name="Zachariae W."/>
            <person name="Michaelis C."/>
            <person name="Shevchenko A."/>
            <person name="Mann M."/>
            <person name="Nasmyth K."/>
        </authorList>
    </citation>
    <scope>FUNCTION</scope>
    <scope>INTERACTION WITH PDS1</scope>
</reference>
<reference key="5">
    <citation type="journal article" date="1999" name="Nature">
        <title>Sister-chromatid separation at anaphase onset is promoted by cleavage of the cohesin subunit Scc1.</title>
        <authorList>
            <person name="Uhlmann F."/>
            <person name="Lottspeich F."/>
            <person name="Nasmyth K."/>
        </authorList>
    </citation>
    <scope>CLEAVAGE OF MCD1</scope>
    <scope>FUNCTION</scope>
</reference>
<reference key="6">
    <citation type="journal article" date="2001" name="J. Cell Biol.">
        <title>A novel role of the budding yeast separin Esp1 in anaphase spindle elongation: evidence that proper spindle association of Esp1 is regulated by Pds1.</title>
        <authorList>
            <person name="Jensen S."/>
            <person name="Segal M."/>
            <person name="Clarke D.J."/>
            <person name="Reed S.I."/>
        </authorList>
    </citation>
    <scope>FUNCTION</scope>
    <scope>SUBCELLULAR LOCATION</scope>
    <scope>MUTAGENESIS OF 1568-ASP--ASP-1570</scope>
</reference>
<reference key="7">
    <citation type="journal article" date="2002" name="Cell">
        <title>Separase, polo kinase, the kinetochore protein Slk19, and Spo12 function in a network that controls Cdc14 localization during early anaphase.</title>
        <authorList>
            <person name="Stegmeier F."/>
            <person name="Visintin R."/>
            <person name="Amon A."/>
        </authorList>
    </citation>
    <scope>FUNCTION AS A COMPONENT OF THE FEAR NETWORK</scope>
</reference>
<comment type="function">
    <text evidence="3 4 5 6">Caspase-like protease, which plays a central role in the chromosome segregation by cleaving the MCD1/SCC1 subunit of the cohesin complex at the onset of anaphase. During most of the cell cycle, it is inactivated by securin/PDS1 protein. It also promotes anaphase spindle elongation. A component of the FEAR (CDC14 early anaphase release) network which promotes CDC14 release from the nucleolus during early anaphase. Cleaves SLK19.</text>
</comment>
<comment type="catalytic activity">
    <reaction>
        <text>All bonds known to be hydrolyzed by this endopeptidase have arginine in P1 and an acidic residue in P4. P6 is often occupied by an acidic residue or by a hydroxy-amino-acid residue, the phosphorylation of which enhances cleavage.</text>
        <dbReference type="EC" id="3.4.22.49"/>
    </reaction>
</comment>
<comment type="activity regulation">
    <text>It is inactivated via its interaction with PDS1, which probably covers its active site. PDS1 degradation at anaphase, liberates it and triggers MCD1 cleavage.</text>
</comment>
<comment type="subunit">
    <text evidence="6">May bind calcium. Interacts with PDS1. Interacts with MCD1.</text>
</comment>
<comment type="interaction">
    <interactant intactId="EBI-6657">
        <id>Q03018</id>
    </interactant>
    <interactant intactId="EBI-1942">
        <id>Q00362</id>
        <label>CDC55</label>
    </interactant>
    <organismsDiffer>false</organismsDiffer>
    <experiments>2</experiments>
</comment>
<comment type="interaction">
    <interactant intactId="EBI-6657">
        <id>Q03018</id>
    </interactant>
    <interactant intactId="EBI-16908">
        <id>P40316</id>
        <label>PDS1</label>
    </interactant>
    <organismsDiffer>false</organismsDiffer>
    <experiments>2</experiments>
</comment>
<comment type="subcellular location">
    <subcellularLocation>
        <location evidence="4">Nucleus</location>
    </subcellularLocation>
    <subcellularLocation>
        <location evidence="4">Cytoplasm</location>
        <location evidence="4">Cytoskeleton</location>
        <location evidence="4">Microtubule organizing center</location>
        <location evidence="4">Spindle pole body</location>
    </subcellularLocation>
    <subcellularLocation>
        <location evidence="4">Cytoplasm</location>
    </subcellularLocation>
    <text>Accumulates in the nucleus in G2 and is mobilized onto the spindle pole bodies and spindle midzone at anaphase onset, where it persists into midanaphase. The association with MCD1 may be important for its nuclear targeting.</text>
</comment>